<sequence length="78" mass="9145">MVPIVGLIAKSAVNTPRLLYRYLFRCCDRLPEDAKGHYKHHVRQGFNSHEDETDPERIQQIIKKALEDADWILNKVRS</sequence>
<proteinExistence type="inferred from homology"/>
<dbReference type="EMBL" id="GG666468">
    <property type="protein sequence ID" value="EEN68138.1"/>
    <property type="molecule type" value="Genomic_DNA"/>
</dbReference>
<dbReference type="RefSeq" id="XP_002612129.1">
    <property type="nucleotide sequence ID" value="XM_002612083.1"/>
</dbReference>
<dbReference type="SMR" id="B6NK32"/>
<dbReference type="STRING" id="7739.B6NK32"/>
<dbReference type="eggNOG" id="ENOG502S9QI">
    <property type="taxonomic scope" value="Eukaryota"/>
</dbReference>
<dbReference type="InParanoid" id="B6NK32"/>
<dbReference type="Proteomes" id="UP000001554">
    <property type="component" value="Unplaced"/>
</dbReference>
<dbReference type="CDD" id="cd20269">
    <property type="entry name" value="Complex1_LYR_LYRM9"/>
    <property type="match status" value="1"/>
</dbReference>
<dbReference type="InterPro" id="IPR008011">
    <property type="entry name" value="Complex1_LYR_dom"/>
</dbReference>
<dbReference type="InterPro" id="IPR045291">
    <property type="entry name" value="Complex1_LYR_LYRM9"/>
</dbReference>
<dbReference type="InterPro" id="IPR052151">
    <property type="entry name" value="Complex_I_LYR"/>
</dbReference>
<dbReference type="PANTHER" id="PTHR47061">
    <property type="entry name" value="LYR MOTIF-CONTAINING PROTEIN 9"/>
    <property type="match status" value="1"/>
</dbReference>
<dbReference type="PANTHER" id="PTHR47061:SF1">
    <property type="entry name" value="LYR MOTIF-CONTAINING PROTEIN 9"/>
    <property type="match status" value="1"/>
</dbReference>
<dbReference type="Pfam" id="PF05347">
    <property type="entry name" value="Complex1_LYR"/>
    <property type="match status" value="1"/>
</dbReference>
<name>LYRM9_BRAFL</name>
<comment type="similarity">
    <text evidence="1">Belongs to the complex I LYR family. LYRM9 subfamily.</text>
</comment>
<gene>
    <name type="primary">LYRM9</name>
    <name type="ORF">BRAFLDRAFT_231075</name>
</gene>
<organism>
    <name type="scientific">Branchiostoma floridae</name>
    <name type="common">Florida lancelet</name>
    <name type="synonym">Amphioxus</name>
    <dbReference type="NCBI Taxonomy" id="7739"/>
    <lineage>
        <taxon>Eukaryota</taxon>
        <taxon>Metazoa</taxon>
        <taxon>Chordata</taxon>
        <taxon>Cephalochordata</taxon>
        <taxon>Leptocardii</taxon>
        <taxon>Amphioxiformes</taxon>
        <taxon>Branchiostomatidae</taxon>
        <taxon>Branchiostoma</taxon>
    </lineage>
</organism>
<keyword id="KW-1185">Reference proteome</keyword>
<protein>
    <recommendedName>
        <fullName>LYR motif-containing protein 9</fullName>
    </recommendedName>
</protein>
<feature type="chain" id="PRO_0000365120" description="LYR motif-containing protein 9">
    <location>
        <begin position="1"/>
        <end position="78"/>
    </location>
</feature>
<reference key="1">
    <citation type="journal article" date="2008" name="Nature">
        <title>The amphioxus genome and the evolution of the chordate karyotype.</title>
        <authorList>
            <person name="Putnam N.H."/>
            <person name="Butts T."/>
            <person name="Ferrier D.E.K."/>
            <person name="Furlong R.F."/>
            <person name="Hellsten U."/>
            <person name="Kawashima T."/>
            <person name="Robinson-Rechavi M."/>
            <person name="Shoguchi E."/>
            <person name="Terry A."/>
            <person name="Yu J.-K."/>
            <person name="Benito-Gutierrez E.L."/>
            <person name="Dubchak I."/>
            <person name="Garcia-Fernandez J."/>
            <person name="Gibson-Brown J.J."/>
            <person name="Grigoriev I.V."/>
            <person name="Horton A.C."/>
            <person name="de Jong P.J."/>
            <person name="Jurka J."/>
            <person name="Kapitonov V.V."/>
            <person name="Kohara Y."/>
            <person name="Kuroki Y."/>
            <person name="Lindquist E."/>
            <person name="Lucas S."/>
            <person name="Osoegawa K."/>
            <person name="Pennacchio L.A."/>
            <person name="Salamov A.A."/>
            <person name="Satou Y."/>
            <person name="Sauka-Spengler T."/>
            <person name="Schmutz J."/>
            <person name="Shin-I T."/>
            <person name="Toyoda A."/>
            <person name="Bronner-Fraser M."/>
            <person name="Fujiyama A."/>
            <person name="Holland L.Z."/>
            <person name="Holland P.W.H."/>
            <person name="Satoh N."/>
            <person name="Rokhsar D.S."/>
        </authorList>
    </citation>
    <scope>NUCLEOTIDE SEQUENCE [LARGE SCALE GENOMIC DNA]</scope>
    <source>
        <strain>S238N-H82</strain>
        <tissue>Testis</tissue>
    </source>
</reference>
<accession>B6NK32</accession>
<accession>C3XVL2</accession>
<evidence type="ECO:0000305" key="1"/>